<organism>
    <name type="scientific">Canis lupus familiaris</name>
    <name type="common">Dog</name>
    <name type="synonym">Canis familiaris</name>
    <dbReference type="NCBI Taxonomy" id="9615"/>
    <lineage>
        <taxon>Eukaryota</taxon>
        <taxon>Metazoa</taxon>
        <taxon>Chordata</taxon>
        <taxon>Craniata</taxon>
        <taxon>Vertebrata</taxon>
        <taxon>Euteleostomi</taxon>
        <taxon>Mammalia</taxon>
        <taxon>Eutheria</taxon>
        <taxon>Laurasiatheria</taxon>
        <taxon>Carnivora</taxon>
        <taxon>Caniformia</taxon>
        <taxon>Canidae</taxon>
        <taxon>Canis</taxon>
    </lineage>
</organism>
<feature type="signal peptide" evidence="3">
    <location>
        <begin position="1"/>
        <end position="22"/>
    </location>
</feature>
<feature type="chain" id="PRO_0000005557" description="Cobalamin binding intrinsic factor">
    <location>
        <begin position="23"/>
        <end position="417"/>
    </location>
</feature>
<feature type="binding site" evidence="1">
    <location>
        <position position="171"/>
    </location>
    <ligand>
        <name>cob(II)alamin</name>
        <dbReference type="ChEBI" id="CHEBI:16304"/>
    </ligand>
</feature>
<feature type="binding site" evidence="1">
    <location>
        <position position="222"/>
    </location>
    <ligand>
        <name>cob(II)alamin</name>
        <dbReference type="ChEBI" id="CHEBI:16304"/>
    </ligand>
</feature>
<feature type="binding site" evidence="1">
    <location>
        <position position="270"/>
    </location>
    <ligand>
        <name>cob(II)alamin</name>
        <dbReference type="ChEBI" id="CHEBI:16304"/>
    </ligand>
</feature>
<feature type="binding site" evidence="1">
    <location>
        <begin position="365"/>
        <end position="370"/>
    </location>
    <ligand>
        <name>cob(II)alamin</name>
        <dbReference type="ChEBI" id="CHEBI:16304"/>
    </ligand>
</feature>
<feature type="binding site" evidence="1">
    <location>
        <begin position="386"/>
        <end position="395"/>
    </location>
    <ligand>
        <name>cob(II)alamin</name>
        <dbReference type="ChEBI" id="CHEBI:16304"/>
    </ligand>
</feature>
<feature type="modified residue" description="Phosphoserine" evidence="2">
    <location>
        <position position="191"/>
    </location>
</feature>
<feature type="glycosylation site" description="N-linked (GlcNAc...) asparagine" evidence="3">
    <location>
        <position position="100"/>
    </location>
</feature>
<feature type="glycosylation site" description="N-linked (GlcNAc...) asparagine" evidence="3">
    <location>
        <position position="209"/>
    </location>
</feature>
<feature type="glycosylation site" description="N-linked (GlcNAc...) asparagine" evidence="3">
    <location>
        <position position="311"/>
    </location>
</feature>
<feature type="glycosylation site" description="N-linked (GlcNAc...) asparagine" evidence="3">
    <location>
        <position position="330"/>
    </location>
</feature>
<feature type="glycosylation site" description="N-linked (GlcNAc...) asparagine" evidence="3">
    <location>
        <position position="413"/>
    </location>
</feature>
<feature type="disulfide bond" evidence="1">
    <location>
        <begin position="26"/>
        <end position="246"/>
    </location>
</feature>
<feature type="disulfide bond" evidence="1">
    <location>
        <begin position="103"/>
        <end position="288"/>
    </location>
</feature>
<feature type="disulfide bond" evidence="1">
    <location>
        <begin position="143"/>
        <end position="182"/>
    </location>
</feature>
<keyword id="KW-0170">Cobalt</keyword>
<keyword id="KW-0171">Cobalt transport</keyword>
<keyword id="KW-1015">Disulfide bond</keyword>
<keyword id="KW-0325">Glycoprotein</keyword>
<keyword id="KW-0406">Ion transport</keyword>
<keyword id="KW-0597">Phosphoprotein</keyword>
<keyword id="KW-1185">Reference proteome</keyword>
<keyword id="KW-0964">Secreted</keyword>
<keyword id="KW-0732">Signal</keyword>
<keyword id="KW-0813">Transport</keyword>
<accession>Q5XWD5</accession>
<name>IF_CANLF</name>
<comment type="function">
    <text evidence="1">Promotes absorption of the essential vitamin cobalamin (Cbl) in the ileum. After interaction with CUBN, the CBLIF-cobalamin complex is internalized via receptor-mediated endocytosis (By similarity).</text>
</comment>
<comment type="subunit">
    <text evidence="1">Interacts with CUBN (via CUB domains).</text>
</comment>
<comment type="subcellular location">
    <subcellularLocation>
        <location evidence="1">Secreted</location>
    </subcellularLocation>
</comment>
<comment type="similarity">
    <text evidence="4">Belongs to the eukaryotic cobalamin transport proteins family.</text>
</comment>
<reference key="1">
    <citation type="submission" date="2004-08" db="EMBL/GenBank/DDBJ databases">
        <title>cDNA sequence of canine pancreatic intrinsic factor.</title>
        <authorList>
            <person name="Fyfe J.C."/>
            <person name="Gearhart P."/>
        </authorList>
    </citation>
    <scope>NUCLEOTIDE SEQUENCE [MRNA]</scope>
</reference>
<protein>
    <recommendedName>
        <fullName evidence="4">Cobalamin binding intrinsic factor</fullName>
    </recommendedName>
    <alternativeName>
        <fullName evidence="4">Gastric intrinsic factor</fullName>
    </alternativeName>
    <alternativeName>
        <fullName>Intrinsic factor</fullName>
        <shortName>IF</shortName>
        <shortName>INF</shortName>
    </alternativeName>
    <alternativeName>
        <fullName>Pancreatic intrinsic factor</fullName>
    </alternativeName>
</protein>
<proteinExistence type="evidence at transcript level"/>
<gene>
    <name type="primary">CBLIF</name>
    <name type="synonym">GIF</name>
</gene>
<dbReference type="EMBL" id="AY730674">
    <property type="protein sequence ID" value="AAU44784.1"/>
    <property type="molecule type" value="mRNA"/>
</dbReference>
<dbReference type="RefSeq" id="NP_001005759.1">
    <property type="nucleotide sequence ID" value="NM_001005759.1"/>
</dbReference>
<dbReference type="SMR" id="Q5XWD5"/>
<dbReference type="FunCoup" id="Q5XWD5">
    <property type="interactions" value="16"/>
</dbReference>
<dbReference type="STRING" id="9615.ENSCAFP00000015184"/>
<dbReference type="GlyCosmos" id="Q5XWD5">
    <property type="glycosylation" value="5 sites, No reported glycans"/>
</dbReference>
<dbReference type="PaxDb" id="9612-ENSCAFP00000015184"/>
<dbReference type="Ensembl" id="ENSCAFT00845034354.1">
    <property type="protein sequence ID" value="ENSCAFP00845026895.1"/>
    <property type="gene ID" value="ENSCAFG00845019472.1"/>
</dbReference>
<dbReference type="GeneID" id="449477"/>
<dbReference type="KEGG" id="cfa:449477"/>
<dbReference type="CTD" id="2694"/>
<dbReference type="VEuPathDB" id="HostDB:ENSCAFG00845019472"/>
<dbReference type="VGNC" id="VGNC:41212">
    <property type="gene designation" value="CBLIF"/>
</dbReference>
<dbReference type="eggNOG" id="ENOG502RXIA">
    <property type="taxonomic scope" value="Eukaryota"/>
</dbReference>
<dbReference type="GeneTree" id="ENSGT00530000063370"/>
<dbReference type="InParanoid" id="Q5XWD5"/>
<dbReference type="OrthoDB" id="6343110at2759"/>
<dbReference type="Reactome" id="R-CFA-9758881">
    <property type="pathway name" value="Uptake of dietary cobalamins into enterocytes"/>
</dbReference>
<dbReference type="Proteomes" id="UP000002254">
    <property type="component" value="Unplaced"/>
</dbReference>
<dbReference type="Proteomes" id="UP000694429">
    <property type="component" value="Unplaced"/>
</dbReference>
<dbReference type="Proteomes" id="UP000694542">
    <property type="component" value="Unplaced"/>
</dbReference>
<dbReference type="Proteomes" id="UP000805418">
    <property type="component" value="Chromosome 21"/>
</dbReference>
<dbReference type="GO" id="GO:0016324">
    <property type="term" value="C:apical plasma membrane"/>
    <property type="evidence" value="ECO:0007669"/>
    <property type="project" value="Ensembl"/>
</dbReference>
<dbReference type="GO" id="GO:0005768">
    <property type="term" value="C:endosome"/>
    <property type="evidence" value="ECO:0007669"/>
    <property type="project" value="Ensembl"/>
</dbReference>
<dbReference type="GO" id="GO:0005615">
    <property type="term" value="C:extracellular space"/>
    <property type="evidence" value="ECO:0000318"/>
    <property type="project" value="GO_Central"/>
</dbReference>
<dbReference type="GO" id="GO:0005902">
    <property type="term" value="C:microvillus"/>
    <property type="evidence" value="ECO:0007669"/>
    <property type="project" value="Ensembl"/>
</dbReference>
<dbReference type="GO" id="GO:0031419">
    <property type="term" value="F:cobalamin binding"/>
    <property type="evidence" value="ECO:0000318"/>
    <property type="project" value="GO_Central"/>
</dbReference>
<dbReference type="GO" id="GO:0015889">
    <property type="term" value="P:cobalamin transport"/>
    <property type="evidence" value="ECO:0000318"/>
    <property type="project" value="GO_Central"/>
</dbReference>
<dbReference type="GO" id="GO:0006824">
    <property type="term" value="P:cobalt ion transport"/>
    <property type="evidence" value="ECO:0007669"/>
    <property type="project" value="UniProtKB-KW"/>
</dbReference>
<dbReference type="Gene3D" id="1.50.10.20">
    <property type="match status" value="1"/>
</dbReference>
<dbReference type="Gene3D" id="2.170.130.30">
    <property type="match status" value="1"/>
</dbReference>
<dbReference type="InterPro" id="IPR002157">
    <property type="entry name" value="Cbl-bd_prot"/>
</dbReference>
<dbReference type="InterPro" id="IPR051588">
    <property type="entry name" value="Cobalamin_Transport"/>
</dbReference>
<dbReference type="PANTHER" id="PTHR10559:SF15">
    <property type="entry name" value="COBALAMIN BINDING INTRINSIC FACTOR"/>
    <property type="match status" value="1"/>
</dbReference>
<dbReference type="PANTHER" id="PTHR10559">
    <property type="entry name" value="TRANSCOBALAMIN-1/GASTRIC INTRINSIC FACTOR"/>
    <property type="match status" value="1"/>
</dbReference>
<dbReference type="Pfam" id="PF01122">
    <property type="entry name" value="Cobalamin_bind"/>
    <property type="match status" value="1"/>
</dbReference>
<dbReference type="PROSITE" id="PS00468">
    <property type="entry name" value="COBALAMIN_BINDING"/>
    <property type="match status" value="1"/>
</dbReference>
<sequence length="417" mass="44982">MAWFSLHLLHLLWAAAGTSTWARSSCSVPQAAQHLVDGLQVLLEDSVSSAAPPNPSVLIAMNLAGALSAEARELLADRLGASDSAGLSVGQLALTIMALNSSCRDPGNKVSVLYGQMEAWPPSSPSAPAWTFYGPSLAVLALCQEHPGRALPVAARLAKILAAGLSPFNTDTGAMVTLALTCMYNKIPEGSEEGYRTLFSQVLKDVVENISMRIKDNGIIGDVYSTGLAMQALSVTPEPPNKEWDCKKTMDTILKEIEQGKFHNPMSIAQILPSLKGKTYLDVPYVSCSPGHQVQPTLPSQPSPVPTSASNITVAYTINNQLKGVELVFNETIDVSVKDGSVLLVVLEEAQRRNPMFKFVTTMTSWGLVVSSINNIAESVHDRTYWQFLSGKTPLNEGVADYTPRDHEHITANFTQY</sequence>
<evidence type="ECO:0000250" key="1"/>
<evidence type="ECO:0000250" key="2">
    <source>
        <dbReference type="UniProtKB" id="P17267"/>
    </source>
</evidence>
<evidence type="ECO:0000255" key="3"/>
<evidence type="ECO:0000305" key="4"/>